<name>GET2_DEBHA</name>
<feature type="chain" id="PRO_0000388631" description="Golgi to ER traffic protein 2">
    <location>
        <begin position="1"/>
        <end position="303"/>
    </location>
</feature>
<feature type="topological domain" description="Cytoplasmic" evidence="1">
    <location>
        <begin position="1"/>
        <end position="168"/>
    </location>
</feature>
<feature type="transmembrane region" description="Helical" evidence="1">
    <location>
        <begin position="169"/>
        <end position="189"/>
    </location>
</feature>
<feature type="topological domain" description="Lumenal" evidence="1">
    <location>
        <begin position="190"/>
        <end position="216"/>
    </location>
</feature>
<feature type="transmembrane region" description="Helical" evidence="1">
    <location>
        <begin position="217"/>
        <end position="236"/>
    </location>
</feature>
<feature type="topological domain" description="Cytoplasmic" evidence="1">
    <location>
        <begin position="237"/>
        <end position="280"/>
    </location>
</feature>
<feature type="transmembrane region" description="Helical" evidence="1">
    <location>
        <begin position="281"/>
        <end position="301"/>
    </location>
</feature>
<feature type="topological domain" description="Lumenal" evidence="1">
    <location>
        <begin position="302"/>
        <end position="303"/>
    </location>
</feature>
<feature type="region of interest" description="Disordered" evidence="2">
    <location>
        <begin position="19"/>
        <end position="86"/>
    </location>
</feature>
<feature type="compositionally biased region" description="Polar residues" evidence="2">
    <location>
        <begin position="31"/>
        <end position="48"/>
    </location>
</feature>
<organism>
    <name type="scientific">Debaryomyces hansenii (strain ATCC 36239 / CBS 767 / BCRC 21394 / JCM 1990 / NBRC 0083 / IGC 2968)</name>
    <name type="common">Yeast</name>
    <name type="synonym">Torulaspora hansenii</name>
    <dbReference type="NCBI Taxonomy" id="284592"/>
    <lineage>
        <taxon>Eukaryota</taxon>
        <taxon>Fungi</taxon>
        <taxon>Dikarya</taxon>
        <taxon>Ascomycota</taxon>
        <taxon>Saccharomycotina</taxon>
        <taxon>Pichiomycetes</taxon>
        <taxon>Debaryomycetaceae</taxon>
        <taxon>Debaryomyces</taxon>
    </lineage>
</organism>
<protein>
    <recommendedName>
        <fullName evidence="1">Golgi to ER traffic protein 2</fullName>
    </recommendedName>
</protein>
<evidence type="ECO:0000255" key="1">
    <source>
        <dbReference type="HAMAP-Rule" id="MF_03114"/>
    </source>
</evidence>
<evidence type="ECO:0000256" key="2">
    <source>
        <dbReference type="SAM" id="MobiDB-lite"/>
    </source>
</evidence>
<dbReference type="EMBL" id="CR382134">
    <property type="protein sequence ID" value="CAG85419.2"/>
    <property type="molecule type" value="Genomic_DNA"/>
</dbReference>
<dbReference type="RefSeq" id="XP_457415.2">
    <property type="nucleotide sequence ID" value="XM_457415.1"/>
</dbReference>
<dbReference type="SMR" id="Q6BWK4"/>
<dbReference type="FunCoup" id="Q6BWK4">
    <property type="interactions" value="68"/>
</dbReference>
<dbReference type="STRING" id="284592.Q6BWK4"/>
<dbReference type="GeneID" id="2913342"/>
<dbReference type="KEGG" id="dha:DEHA2B10626g"/>
<dbReference type="VEuPathDB" id="FungiDB:DEHA2B10626g"/>
<dbReference type="eggNOG" id="ENOG502QW0H">
    <property type="taxonomic scope" value="Eukaryota"/>
</dbReference>
<dbReference type="HOGENOM" id="CLU_066477_0_0_1"/>
<dbReference type="InParanoid" id="Q6BWK4"/>
<dbReference type="OMA" id="QYWDVLS"/>
<dbReference type="OrthoDB" id="4097053at2759"/>
<dbReference type="Proteomes" id="UP000000599">
    <property type="component" value="Chromosome B"/>
</dbReference>
<dbReference type="GO" id="GO:0005789">
    <property type="term" value="C:endoplasmic reticulum membrane"/>
    <property type="evidence" value="ECO:0007669"/>
    <property type="project" value="UniProtKB-SubCell"/>
</dbReference>
<dbReference type="GO" id="GO:0043529">
    <property type="term" value="C:GET complex"/>
    <property type="evidence" value="ECO:0007669"/>
    <property type="project" value="UniProtKB-UniRule"/>
</dbReference>
<dbReference type="GO" id="GO:0000139">
    <property type="term" value="C:Golgi membrane"/>
    <property type="evidence" value="ECO:0007669"/>
    <property type="project" value="UniProtKB-SubCell"/>
</dbReference>
<dbReference type="GO" id="GO:0045048">
    <property type="term" value="P:protein insertion into ER membrane"/>
    <property type="evidence" value="ECO:0007669"/>
    <property type="project" value="UniProtKB-UniRule"/>
</dbReference>
<dbReference type="GO" id="GO:0006890">
    <property type="term" value="P:retrograde vesicle-mediated transport, Golgi to endoplasmic reticulum"/>
    <property type="evidence" value="ECO:0007669"/>
    <property type="project" value="TreeGrafter"/>
</dbReference>
<dbReference type="HAMAP" id="MF_03114">
    <property type="entry name" value="Get2"/>
    <property type="match status" value="1"/>
</dbReference>
<dbReference type="InterPro" id="IPR014802">
    <property type="entry name" value="GET2"/>
</dbReference>
<dbReference type="InterPro" id="IPR028143">
    <property type="entry name" value="Get2/sif1"/>
</dbReference>
<dbReference type="PANTHER" id="PTHR28263">
    <property type="entry name" value="GOLGI TO ER TRAFFIC PROTEIN 2"/>
    <property type="match status" value="1"/>
</dbReference>
<dbReference type="PANTHER" id="PTHR28263:SF1">
    <property type="entry name" value="GOLGI TO ER TRAFFIC PROTEIN 2"/>
    <property type="match status" value="1"/>
</dbReference>
<dbReference type="Pfam" id="PF08690">
    <property type="entry name" value="GET2"/>
    <property type="match status" value="1"/>
</dbReference>
<gene>
    <name evidence="1" type="primary">GET2</name>
    <name type="ordered locus">DEHA2B10626g</name>
</gene>
<keyword id="KW-0256">Endoplasmic reticulum</keyword>
<keyword id="KW-0931">ER-Golgi transport</keyword>
<keyword id="KW-0333">Golgi apparatus</keyword>
<keyword id="KW-0472">Membrane</keyword>
<keyword id="KW-1185">Reference proteome</keyword>
<keyword id="KW-0812">Transmembrane</keyword>
<keyword id="KW-1133">Transmembrane helix</keyword>
<keyword id="KW-0813">Transport</keyword>
<accession>Q6BWK4</accession>
<reference key="1">
    <citation type="journal article" date="2004" name="Nature">
        <title>Genome evolution in yeasts.</title>
        <authorList>
            <person name="Dujon B."/>
            <person name="Sherman D."/>
            <person name="Fischer G."/>
            <person name="Durrens P."/>
            <person name="Casaregola S."/>
            <person name="Lafontaine I."/>
            <person name="de Montigny J."/>
            <person name="Marck C."/>
            <person name="Neuveglise C."/>
            <person name="Talla E."/>
            <person name="Goffard N."/>
            <person name="Frangeul L."/>
            <person name="Aigle M."/>
            <person name="Anthouard V."/>
            <person name="Babour A."/>
            <person name="Barbe V."/>
            <person name="Barnay S."/>
            <person name="Blanchin S."/>
            <person name="Beckerich J.-M."/>
            <person name="Beyne E."/>
            <person name="Bleykasten C."/>
            <person name="Boisrame A."/>
            <person name="Boyer J."/>
            <person name="Cattolico L."/>
            <person name="Confanioleri F."/>
            <person name="de Daruvar A."/>
            <person name="Despons L."/>
            <person name="Fabre E."/>
            <person name="Fairhead C."/>
            <person name="Ferry-Dumazet H."/>
            <person name="Groppi A."/>
            <person name="Hantraye F."/>
            <person name="Hennequin C."/>
            <person name="Jauniaux N."/>
            <person name="Joyet P."/>
            <person name="Kachouri R."/>
            <person name="Kerrest A."/>
            <person name="Koszul R."/>
            <person name="Lemaire M."/>
            <person name="Lesur I."/>
            <person name="Ma L."/>
            <person name="Muller H."/>
            <person name="Nicaud J.-M."/>
            <person name="Nikolski M."/>
            <person name="Oztas S."/>
            <person name="Ozier-Kalogeropoulos O."/>
            <person name="Pellenz S."/>
            <person name="Potier S."/>
            <person name="Richard G.-F."/>
            <person name="Straub M.-L."/>
            <person name="Suleau A."/>
            <person name="Swennen D."/>
            <person name="Tekaia F."/>
            <person name="Wesolowski-Louvel M."/>
            <person name="Westhof E."/>
            <person name="Wirth B."/>
            <person name="Zeniou-Meyer M."/>
            <person name="Zivanovic Y."/>
            <person name="Bolotin-Fukuhara M."/>
            <person name="Thierry A."/>
            <person name="Bouchier C."/>
            <person name="Caudron B."/>
            <person name="Scarpelli C."/>
            <person name="Gaillardin C."/>
            <person name="Weissenbach J."/>
            <person name="Wincker P."/>
            <person name="Souciet J.-L."/>
        </authorList>
    </citation>
    <scope>NUCLEOTIDE SEQUENCE [LARGE SCALE GENOMIC DNA]</scope>
    <source>
        <strain>ATCC 36239 / CBS 767 / BCRC 21394 / JCM 1990 / NBRC 0083 / IGC 2968</strain>
    </source>
</reference>
<comment type="function">
    <text evidence="1">Required for the post-translational delivery of tail-anchored (TA) proteins to the endoplasmic reticulum. Together with GET1, acts as a membrane receptor for soluble GET3, which recognizes and selectively binds the transmembrane domain of TA proteins in the cytosol. The GET complex cooperates with the HDEL receptor ERD2 to mediate the ATP-dependent retrieval of resident ER proteins that contain a C-terminal H-D-E-L retention signal from the Golgi to the ER.</text>
</comment>
<comment type="subunit">
    <text evidence="1">Component of the Golgi to ER traffic (GET) complex, which is composed of GET1, GET2 and GET3. Within the complex, GET1 and GET2 form a heterotetramer which is stabilized by phosphatidylinositol binding and which binds to the GET3 homodimer.</text>
</comment>
<comment type="subcellular location">
    <subcellularLocation>
        <location evidence="1">Endoplasmic reticulum membrane</location>
        <topology evidence="1">Multi-pass membrane protein</topology>
    </subcellularLocation>
    <subcellularLocation>
        <location evidence="1">Golgi apparatus membrane</location>
        <topology evidence="1">Multi-pass membrane protein</topology>
    </subcellularLocation>
</comment>
<comment type="similarity">
    <text evidence="1">Belongs to the GET2 family.</text>
</comment>
<sequence>MSEQPLSQDEKRRLLRERRQAKMARGKASERLNNILSQGSSVKGTTDPVSVFDSKPEPTASSTKPAEVSPAVSSHRDPEDDPDLMDIDNVTPEIKVDEPNIDKMLSDIFGANVGGNATDSSQDDFMANMMNMMKQGEGVDGSTGGTAEPQEPGYQSQLNAYNIYQQRLWKFRFSIIRFAAVLTNFFYHYLTIQDYSFTSSPHFYVRALAPHPAVNSFITWFSTCEVAILASFYLITSKNNIYANASDGNLLLKGISMGAMVLPQLRAYQPLVIRLAHYWEVFSMLLGDIFLVVVLFGLVSIYN</sequence>
<proteinExistence type="inferred from homology"/>